<evidence type="ECO:0000255" key="1">
    <source>
        <dbReference type="HAMAP-Rule" id="MF_00022"/>
    </source>
</evidence>
<gene>
    <name evidence="1" type="primary">gltX1</name>
    <name type="ordered locus">ERGA_CDS_07930</name>
</gene>
<keyword id="KW-0030">Aminoacyl-tRNA synthetase</keyword>
<keyword id="KW-0067">ATP-binding</keyword>
<keyword id="KW-0963">Cytoplasm</keyword>
<keyword id="KW-0436">Ligase</keyword>
<keyword id="KW-0547">Nucleotide-binding</keyword>
<keyword id="KW-0648">Protein biosynthesis</keyword>
<feature type="chain" id="PRO_0000119558" description="Glutamate--tRNA ligase 1">
    <location>
        <begin position="1"/>
        <end position="445"/>
    </location>
</feature>
<feature type="short sequence motif" description="'HIGH' region" evidence="1">
    <location>
        <begin position="9"/>
        <end position="19"/>
    </location>
</feature>
<feature type="short sequence motif" description="'KMSKS' region" evidence="1">
    <location>
        <begin position="238"/>
        <end position="242"/>
    </location>
</feature>
<feature type="binding site" evidence="1">
    <location>
        <position position="241"/>
    </location>
    <ligand>
        <name>ATP</name>
        <dbReference type="ChEBI" id="CHEBI:30616"/>
    </ligand>
</feature>
<protein>
    <recommendedName>
        <fullName evidence="1">Glutamate--tRNA ligase 1</fullName>
        <ecNumber evidence="1">6.1.1.17</ecNumber>
    </recommendedName>
    <alternativeName>
        <fullName evidence="1">Glutamyl-tRNA synthetase 1</fullName>
        <shortName evidence="1">GluRS 1</shortName>
    </alternativeName>
</protein>
<organism>
    <name type="scientific">Ehrlichia ruminantium (strain Gardel)</name>
    <dbReference type="NCBI Taxonomy" id="302409"/>
    <lineage>
        <taxon>Bacteria</taxon>
        <taxon>Pseudomonadati</taxon>
        <taxon>Pseudomonadota</taxon>
        <taxon>Alphaproteobacteria</taxon>
        <taxon>Rickettsiales</taxon>
        <taxon>Anaplasmataceae</taxon>
        <taxon>Ehrlichia</taxon>
    </lineage>
</organism>
<comment type="function">
    <text evidence="1">Catalyzes the attachment of glutamate to tRNA(Glu) in a two-step reaction: glutamate is first activated by ATP to form Glu-AMP and then transferred to the acceptor end of tRNA(Glu).</text>
</comment>
<comment type="catalytic activity">
    <reaction evidence="1">
        <text>tRNA(Glu) + L-glutamate + ATP = L-glutamyl-tRNA(Glu) + AMP + diphosphate</text>
        <dbReference type="Rhea" id="RHEA:23540"/>
        <dbReference type="Rhea" id="RHEA-COMP:9663"/>
        <dbReference type="Rhea" id="RHEA-COMP:9680"/>
        <dbReference type="ChEBI" id="CHEBI:29985"/>
        <dbReference type="ChEBI" id="CHEBI:30616"/>
        <dbReference type="ChEBI" id="CHEBI:33019"/>
        <dbReference type="ChEBI" id="CHEBI:78442"/>
        <dbReference type="ChEBI" id="CHEBI:78520"/>
        <dbReference type="ChEBI" id="CHEBI:456215"/>
        <dbReference type="EC" id="6.1.1.17"/>
    </reaction>
</comment>
<comment type="subunit">
    <text evidence="1">Monomer.</text>
</comment>
<comment type="subcellular location">
    <subcellularLocation>
        <location evidence="1">Cytoplasm</location>
    </subcellularLocation>
</comment>
<comment type="similarity">
    <text evidence="1">Belongs to the class-I aminoacyl-tRNA synthetase family. Glutamate--tRNA ligase type 1 subfamily.</text>
</comment>
<proteinExistence type="inferred from homology"/>
<name>SYE1_EHRRG</name>
<dbReference type="EC" id="6.1.1.17" evidence="1"/>
<dbReference type="EMBL" id="CR925677">
    <property type="protein sequence ID" value="CAI28245.1"/>
    <property type="molecule type" value="Genomic_DNA"/>
</dbReference>
<dbReference type="RefSeq" id="WP_011255857.1">
    <property type="nucleotide sequence ID" value="NC_006831.1"/>
</dbReference>
<dbReference type="SMR" id="Q5FGB6"/>
<dbReference type="KEGG" id="erg:ERGA_CDS_07930"/>
<dbReference type="HOGENOM" id="CLU_015768_6_1_5"/>
<dbReference type="OrthoDB" id="9807503at2"/>
<dbReference type="Proteomes" id="UP000000533">
    <property type="component" value="Chromosome"/>
</dbReference>
<dbReference type="GO" id="GO:0005737">
    <property type="term" value="C:cytoplasm"/>
    <property type="evidence" value="ECO:0007669"/>
    <property type="project" value="UniProtKB-SubCell"/>
</dbReference>
<dbReference type="GO" id="GO:0005524">
    <property type="term" value="F:ATP binding"/>
    <property type="evidence" value="ECO:0007669"/>
    <property type="project" value="UniProtKB-UniRule"/>
</dbReference>
<dbReference type="GO" id="GO:0004818">
    <property type="term" value="F:glutamate-tRNA ligase activity"/>
    <property type="evidence" value="ECO:0007669"/>
    <property type="project" value="UniProtKB-UniRule"/>
</dbReference>
<dbReference type="GO" id="GO:0000049">
    <property type="term" value="F:tRNA binding"/>
    <property type="evidence" value="ECO:0007669"/>
    <property type="project" value="InterPro"/>
</dbReference>
<dbReference type="GO" id="GO:0006424">
    <property type="term" value="P:glutamyl-tRNA aminoacylation"/>
    <property type="evidence" value="ECO:0007669"/>
    <property type="project" value="UniProtKB-UniRule"/>
</dbReference>
<dbReference type="Gene3D" id="1.10.10.350">
    <property type="match status" value="1"/>
</dbReference>
<dbReference type="Gene3D" id="3.40.50.620">
    <property type="entry name" value="HUPs"/>
    <property type="match status" value="1"/>
</dbReference>
<dbReference type="HAMAP" id="MF_00022">
    <property type="entry name" value="Glu_tRNA_synth_type1"/>
    <property type="match status" value="1"/>
</dbReference>
<dbReference type="InterPro" id="IPR045462">
    <property type="entry name" value="aa-tRNA-synth_I_cd-bd"/>
</dbReference>
<dbReference type="InterPro" id="IPR020751">
    <property type="entry name" value="aa-tRNA-synth_I_codon-bd_sub2"/>
</dbReference>
<dbReference type="InterPro" id="IPR001412">
    <property type="entry name" value="aa-tRNA-synth_I_CS"/>
</dbReference>
<dbReference type="InterPro" id="IPR008925">
    <property type="entry name" value="aa_tRNA-synth_I_cd-bd_sf"/>
</dbReference>
<dbReference type="InterPro" id="IPR004527">
    <property type="entry name" value="Glu-tRNA-ligase_bac/mito"/>
</dbReference>
<dbReference type="InterPro" id="IPR000924">
    <property type="entry name" value="Glu/Gln-tRNA-synth"/>
</dbReference>
<dbReference type="InterPro" id="IPR020058">
    <property type="entry name" value="Glu/Gln-tRNA-synth_Ib_cat-dom"/>
</dbReference>
<dbReference type="InterPro" id="IPR049940">
    <property type="entry name" value="GluQ/Sye"/>
</dbReference>
<dbReference type="InterPro" id="IPR014729">
    <property type="entry name" value="Rossmann-like_a/b/a_fold"/>
</dbReference>
<dbReference type="NCBIfam" id="TIGR00464">
    <property type="entry name" value="gltX_bact"/>
    <property type="match status" value="1"/>
</dbReference>
<dbReference type="PANTHER" id="PTHR43311">
    <property type="entry name" value="GLUTAMATE--TRNA LIGASE"/>
    <property type="match status" value="1"/>
</dbReference>
<dbReference type="PANTHER" id="PTHR43311:SF2">
    <property type="entry name" value="GLUTAMATE--TRNA LIGASE, MITOCHONDRIAL-RELATED"/>
    <property type="match status" value="1"/>
</dbReference>
<dbReference type="Pfam" id="PF19269">
    <property type="entry name" value="Anticodon_2"/>
    <property type="match status" value="1"/>
</dbReference>
<dbReference type="Pfam" id="PF00749">
    <property type="entry name" value="tRNA-synt_1c"/>
    <property type="match status" value="1"/>
</dbReference>
<dbReference type="PRINTS" id="PR00987">
    <property type="entry name" value="TRNASYNTHGLU"/>
</dbReference>
<dbReference type="SUPFAM" id="SSF48163">
    <property type="entry name" value="An anticodon-binding domain of class I aminoacyl-tRNA synthetases"/>
    <property type="match status" value="1"/>
</dbReference>
<dbReference type="SUPFAM" id="SSF52374">
    <property type="entry name" value="Nucleotidylyl transferase"/>
    <property type="match status" value="1"/>
</dbReference>
<dbReference type="PROSITE" id="PS00178">
    <property type="entry name" value="AA_TRNA_LIGASE_I"/>
    <property type="match status" value="1"/>
</dbReference>
<reference key="1">
    <citation type="journal article" date="2006" name="J. Bacteriol.">
        <title>Comparative genomic analysis of three strains of Ehrlichia ruminantium reveals an active process of genome size plasticity.</title>
        <authorList>
            <person name="Frutos R."/>
            <person name="Viari A."/>
            <person name="Ferraz C."/>
            <person name="Morgat A."/>
            <person name="Eychenie S."/>
            <person name="Kandassamy Y."/>
            <person name="Chantal I."/>
            <person name="Bensaid A."/>
            <person name="Coissac E."/>
            <person name="Vachiery N."/>
            <person name="Demaille J."/>
            <person name="Martinez D."/>
        </authorList>
    </citation>
    <scope>NUCLEOTIDE SEQUENCE [LARGE SCALE GENOMIC DNA]</scope>
    <source>
        <strain>Gardel</strain>
    </source>
</reference>
<sequence length="445" mass="51819">MIMMTRFAPSPTGYLHVGNVRTALICWLYTRSKQGRFLLRFDDTDLQRSKDDYRNEIANDLKWLQMDWDFDVRQSSRFDRYDEIFNYLLKEELIYPCYESKEELDFKRKMQLKLGLPPIYDRSALKLTQDEKNKYSEQDVYFRFKIDQSQLISWDDEIRGKVSFNAANISDPIVKRADGTYTYMLPSVIDDIDFDITHIVRGEDHISNTAIQIQMFNALRASVPTFSHLSLLYCDDNKISKRVGGFSIKDMQFYELEPMAINSYFAKIGTSDPIVVHTKIQDLIYNFDITKFNQAPTQFNIDDVIKLNPKVLHKMSFSDVKHRLSELNITSPDLWDFVSGNVQKFSDIQEWIKICGQSTVPVINESDQDFIKMALSVFPNGEINQDTWKTWVANIKEKTDRKSKDIFIPLRLALTGISTGPELAKLLPILGRAEIIRRLGYSSRC</sequence>
<accession>Q5FGB6</accession>